<organism>
    <name type="scientific">Escherichia phage Mu</name>
    <name type="common">Bacteriophage Mu</name>
    <dbReference type="NCBI Taxonomy" id="2681603"/>
    <lineage>
        <taxon>Viruses</taxon>
        <taxon>Duplodnaviria</taxon>
        <taxon>Heunggongvirae</taxon>
        <taxon>Uroviricota</taxon>
        <taxon>Caudoviricetes</taxon>
        <taxon>Muvirus</taxon>
        <taxon>Muvirus mu</taxon>
    </lineage>
</organism>
<evidence type="ECO:0000250" key="1"/>
<evidence type="ECO:0000255" key="2">
    <source>
        <dbReference type="PROSITE-ProRule" id="PRU01039"/>
    </source>
</evidence>
<evidence type="ECO:0000269" key="3">
    <source>
    </source>
</evidence>
<evidence type="ECO:0000269" key="4">
    <source>
    </source>
</evidence>
<evidence type="ECO:0000269" key="5">
    <source>
    </source>
</evidence>
<evidence type="ECO:0000269" key="6">
    <source>
    </source>
</evidence>
<evidence type="ECO:0000269" key="7">
    <source>
    </source>
</evidence>
<evidence type="ECO:0000269" key="8">
    <source>
    </source>
</evidence>
<evidence type="ECO:0000269" key="9">
    <source>
    </source>
</evidence>
<evidence type="ECO:0000269" key="10">
    <source>
    </source>
</evidence>
<evidence type="ECO:0000269" key="11">
    <source>
    </source>
</evidence>
<evidence type="ECO:0000305" key="12"/>
<evidence type="ECO:0007829" key="13">
    <source>
        <dbReference type="PDB" id="1BCM"/>
    </source>
</evidence>
<evidence type="ECO:0007829" key="14">
    <source>
        <dbReference type="PDB" id="1BCO"/>
    </source>
</evidence>
<evidence type="ECO:0007829" key="15">
    <source>
        <dbReference type="PDB" id="1TNS"/>
    </source>
</evidence>
<evidence type="ECO:0007829" key="16">
    <source>
        <dbReference type="PDB" id="2EZH"/>
    </source>
</evidence>
<evidence type="ECO:0007829" key="17">
    <source>
        <dbReference type="PDB" id="2EZK"/>
    </source>
</evidence>
<evidence type="ECO:0007829" key="18">
    <source>
        <dbReference type="PDB" id="2EZL"/>
    </source>
</evidence>
<reference key="1">
    <citation type="journal article" date="1985" name="Proc. Natl. Acad. Sci. U.S.A.">
        <title>Primary structure of phage mu transposase: homology to mu repressor.</title>
        <authorList>
            <person name="Harshey R.M."/>
            <person name="Getzoff E.D."/>
            <person name="Baldwin D.L."/>
            <person name="Miller J.L."/>
            <person name="Chaconas G."/>
        </authorList>
    </citation>
    <scope>NUCLEOTIDE SEQUENCE [GENOMIC DNA]</scope>
    <scope>FUNCTION</scope>
</reference>
<reference key="2">
    <citation type="book" date="1987" name="Phage Mu">
        <title>Sequence of the left end of Mu.</title>
        <editorList>
            <person name="Symonds N."/>
            <person name="Toussaint A."/>
            <person name="van de Putte P."/>
            <person name="Howe M.M."/>
        </editorList>
        <authorList>
            <person name="Priess H."/>
            <person name="Brauer B."/>
            <person name="Schmidt C."/>
            <person name="Kamp D."/>
        </authorList>
    </citation>
    <scope>NUCLEOTIDE SEQUENCE [GENOMIC DNA]</scope>
</reference>
<reference key="3">
    <citation type="journal article" date="2002" name="J. Mol. Biol.">
        <title>Bacteriophage Mu genome sequence: analysis and comparison with Mu-like prophages in Haemophilus, Neisseria and Deinococcus.</title>
        <authorList>
            <person name="Morgan G.J."/>
            <person name="Hatfull G.F."/>
            <person name="Casjens S."/>
            <person name="Hendrix R.W."/>
        </authorList>
    </citation>
    <scope>NUCLEOTIDE SEQUENCE [LARGE SCALE GENOMIC DNA]</scope>
</reference>
<reference key="4">
    <citation type="journal article" date="1982" name="Mol. Gen. Genet.">
        <title>Nucleotide sequence of the immunity region of bacteriophage Mu.</title>
        <authorList>
            <person name="Priess H."/>
            <person name="Kamp D."/>
            <person name="Kahmann R."/>
            <person name="Braeuer B."/>
            <person name="Delius H."/>
        </authorList>
    </citation>
    <scope>NUCLEOTIDE SEQUENCE [GENOMIC DNA] OF 1-88</scope>
</reference>
<reference key="5">
    <citation type="journal article" date="1983" name="Mol. Gen. Genet.">
        <title>The products of gene A of the related phages Mu and D108 differ in their specificities.</title>
        <authorList>
            <person name="Toussaint A."/>
            <person name="Faelen M."/>
            <person name="Desmet L."/>
            <person name="Allet B."/>
        </authorList>
    </citation>
    <scope>NUCLEOTIDE SEQUENCE [GENOMIC DNA] OF 1-84</scope>
</reference>
<reference key="6">
    <citation type="journal article" date="1989" name="EMBO J.">
        <title>Action at a distance in Mu DNA transposition: an enhancer-like element is the site of action of supercoiling relief activity by integration host factor (IHF).</title>
        <authorList>
            <person name="Surette M.G."/>
            <person name="Lavoie B.D."/>
            <person name="Chaconas G."/>
        </authorList>
    </citation>
    <scope>FUNCTION</scope>
</reference>
<reference key="7">
    <citation type="journal article" date="1989" name="J. Bacteriol.">
        <title>Localization and regulation of bacteriophage Mu promoters.</title>
        <authorList>
            <person name="Stoddard S.F."/>
            <person name="Howe M.M."/>
        </authorList>
    </citation>
    <scope>INDUCTION</scope>
</reference>
<reference key="8">
    <citation type="journal article" date="1991" name="EMBO J.">
        <title>Structural aspects of a higher order nucleoprotein complex: induction of an altered DNA structure at the Mu-host junction of the Mu type 1 transpososome.</title>
        <authorList>
            <person name="Lavoie B.D."/>
            <person name="Chan B.S."/>
            <person name="Allison R.G."/>
            <person name="Chaconas G."/>
        </authorList>
    </citation>
    <scope>SUBUNIT</scope>
    <scope>IDENTIFICATION IN THE TRANSPOSOSOME COMPLEX</scope>
</reference>
<reference key="9">
    <citation type="journal article" date="1994" name="Proc. Natl. Acad. Sci. U.S.A.">
        <title>Identification of residues in the Mu transposase essential for catalysis.</title>
        <authorList>
            <person name="Baker T.A."/>
            <person name="Luo L."/>
        </authorList>
    </citation>
    <scope>COFACTOR</scope>
    <scope>MUTAGENESIS OF ASP-269; ASP-294; GLU-392; ASP-550; GLU-556; GLU-558; ASP-567; GLU-573; ASP-596; GLU-599 AND GLU-602</scope>
</reference>
<reference key="10">
    <citation type="journal article" date="1995" name="J. Biol. Chem.">
        <title>Step-arrest mutants of phage Mu transposase. Implications in DNA-protein assembly, Mu end cleavage, and strand transfer.</title>
        <authorList>
            <person name="Kim K."/>
            <person name="Namgoong S.Y."/>
            <person name="Jayaram M."/>
            <person name="Harshey R.M."/>
        </authorList>
    </citation>
    <scope>MUTAGENESIS OF ASP-269; ASP-294; GLY-348 AND GLU-392</scope>
</reference>
<reference key="11">
    <citation type="journal article" date="1995" name="EMBO J.">
        <title>A novel DNA binding and nuclease activity in domain III of Mu transposase: evidence for a catalytic region involved in donor cleavage.</title>
        <authorList>
            <person name="Wu Z."/>
            <person name="Chaconas G."/>
        </authorList>
    </citation>
    <scope>FUNCTION OF C-TERMINAL REGION</scope>
</reference>
<reference key="12">
    <citation type="journal article" date="1996" name="Proc. Natl. Acad. Sci. U.S.A.">
        <title>The wing of the enhancer-binding domain of Mu phage transposase is flexible and is essential for efficient transposition.</title>
        <authorList>
            <person name="Clubb R.T."/>
            <person name="Mizuuchi M."/>
            <person name="Huth J.R."/>
            <person name="Omichinski J.G."/>
            <person name="Savilahti H."/>
            <person name="Mizuuchi K."/>
            <person name="Clore G.M."/>
            <person name="Gronenborn A.M."/>
        </authorList>
    </citation>
    <scope>DNA-BINDING</scope>
</reference>
<reference key="13">
    <citation type="journal article" date="1997" name="Genes Dev.">
        <title>ClpX and MuB interact with overlapping regions of Mu transposase: implications for control of the transposition pathway.</title>
        <authorList>
            <person name="Levchenko I."/>
            <person name="Yamauchi M."/>
            <person name="Baker T.A."/>
        </authorList>
    </citation>
    <scope>INTERACTION WITH MUB AND HOST CLPX</scope>
</reference>
<reference key="14">
    <citation type="journal article" date="1998" name="EMBO J.">
        <title>The same two monomers within a MuA tetramer provide the DDE domains for the strand cleavage and strand transfer steps of transposition.</title>
        <authorList>
            <person name="Namgoong S.Y."/>
            <person name="Harshey R.M."/>
        </authorList>
    </citation>
    <scope>SUBUNIT</scope>
</reference>
<reference key="15">
    <citation type="journal article" date="2001" name="Mol. Microbiol.">
        <title>Differential role of the Mu B protein in phage Mu integration vs. replication: mechanistic insights into two transposition pathways.</title>
        <authorList>
            <person name="Roldan L.A."/>
            <person name="Baker T.A."/>
        </authorList>
    </citation>
    <scope>FUNCTION</scope>
</reference>
<reference key="16">
    <citation type="journal article" date="2002" name="J. Biol. Chem.">
        <title>DNA recognition sites activate MuA transposase to perform transposition of non-Mu DNA.</title>
        <authorList>
            <person name="Goldhaber-Gordon I."/>
            <person name="Williams T.L."/>
            <person name="Baker T.A."/>
        </authorList>
    </citation>
    <scope>FUNCTION</scope>
</reference>
<reference key="17">
    <citation type="journal article" date="2002" name="J. Biol. Chem.">
        <title>Sequence and positional requirements for DNA sites in a mu transpososome.</title>
        <authorList>
            <person name="Goldhaber-Gordon I."/>
            <person name="Early M.H."/>
            <person name="Gray M.K."/>
            <person name="Baker T.A."/>
        </authorList>
    </citation>
    <scope>FUNCTION</scope>
</reference>
<reference key="18">
    <citation type="journal article" date="2002" name="Cell">
        <title>Path of DNA within the Mu transpososome. Transposase interactions bridging two Mu ends and the enhancer trap five DNA supercoils.</title>
        <authorList>
            <person name="Pathania S."/>
            <person name="Jayaram M."/>
            <person name="Harshey R.M."/>
        </authorList>
    </citation>
    <scope>FUNCTION</scope>
</reference>
<reference key="19">
    <citation type="journal article" date="2003" name="Biochemistry">
        <title>MuA transposase separates DNA sequence recognition from catalysis.</title>
        <authorList>
            <person name="Goldhaber-Gordon I."/>
            <person name="Early M.H."/>
            <person name="Baker T.A."/>
        </authorList>
    </citation>
    <scope>CHARACTERIZATION</scope>
    <scope>COFACTOR</scope>
</reference>
<reference key="20">
    <citation type="journal article" date="2005" name="Protein Sci.">
        <title>Remodeling protein complexes: insights from the AAA+ unfoldase ClpX and Mu transposase.</title>
        <authorList>
            <person name="Burton B.M."/>
            <person name="Baker T.A."/>
        </authorList>
    </citation>
    <scope>REVIEW</scope>
</reference>
<reference key="21">
    <citation type="journal article" date="2007" name="J. Mol. Biol.">
        <title>Interactions of phage Mu enhancer and termini that specify the assembly of a topologically unique interwrapped transpososome.</title>
        <authorList>
            <person name="Yin Z."/>
            <person name="Suzuki A."/>
            <person name="Lou Z."/>
            <person name="Jayaram M."/>
            <person name="Harshey R.M."/>
        </authorList>
    </citation>
    <scope>DNA-BINDING</scope>
</reference>
<reference key="22">
    <citation type="journal article" date="2008" name="Mol. Cell">
        <title>Unique contacts direct high-priority recognition of the tetrameric Mu transposase-DNA complex by the AAA+ unfoldase ClpX.</title>
        <authorList>
            <person name="Abdelhakim A.H."/>
            <person name="Oakes E.C."/>
            <person name="Sauer R.T."/>
            <person name="Baker T.A."/>
        </authorList>
    </citation>
    <scope>INTERACTION WITH HOST CLPX</scope>
</reference>
<reference key="23">
    <citation type="journal article" date="2010" name="Proc. Natl. Acad. Sci. U.S.A.">
        <title>DNA repair by the cryptic endonuclease activity of Mu transposase.</title>
        <authorList>
            <person name="Choi W."/>
            <person name="Harshey R.M."/>
        </authorList>
    </citation>
    <scope>FUNCTION AS FLAPS ENDONUCLEASE</scope>
    <scope>MUTAGENESIS OF 575-ARG--LYS-579</scope>
</reference>
<reference key="24">
    <citation type="journal article" date="2010" name="Proc. Natl. Acad. Sci. U.S.A.">
        <title>The AAA+ ClpX machine unfolds a keystone subunit to remodel the Mu transpososome.</title>
        <authorList>
            <person name="Abdelhakim A.H."/>
            <person name="Sauer R.T."/>
            <person name="Baker T.A."/>
        </authorList>
    </citation>
    <scope>FUNCTION</scope>
</reference>
<reference key="25">
    <citation type="journal article" date="2012" name="PLoS Genet.">
        <title>Mu insertions are repaired by the double-strand break repair pathway of Escherichia coli.</title>
        <authorList>
            <person name="Jang S."/>
            <person name="Sandler S.J."/>
            <person name="Harshey R.M."/>
        </authorList>
    </citation>
    <scope>FUNCTION</scope>
</reference>
<reference key="26">
    <citation type="journal article" date="1994" name="Structure">
        <title>A novel class of winged helix-turn-helix protein: the DNA-binding domain of Mu transposase.</title>
        <authorList>
            <person name="Clubb R.T."/>
            <person name="Omichinski J.G."/>
            <person name="Savilahti H."/>
            <person name="Mizuuchi K."/>
            <person name="Gronenborn A.M."/>
            <person name="Clore G.M."/>
        </authorList>
    </citation>
    <scope>STRUCTURE BY NMR OF 1-76</scope>
</reference>
<reference key="27">
    <citation type="journal article" date="1997" name="EMBO J.">
        <title>Solution structure of the Mu end DNA-binding ibeta subdomain of phage Mu transposase: modular DNA recognition by two tethered domains.</title>
        <authorList>
            <person name="Schumacher S."/>
            <person name="Clubb R.T."/>
            <person name="Cai M."/>
            <person name="Mizuuchi K."/>
            <person name="Clore G.M."/>
            <person name="Gronenborn A.M."/>
        </authorList>
    </citation>
    <scope>STRUCTURE BY NMR OF 76-174</scope>
</reference>
<reference key="28">
    <citation type="journal article" date="1997" name="J. Mol. Biol.">
        <title>Solution structure of the I gamma subdomain of the Mu end DNA-binding domain of phage Mu transposase.</title>
        <authorList>
            <person name="Clubb R.T."/>
            <person name="Schumacher S."/>
            <person name="Mizuuchi K."/>
            <person name="Gronenborn A.M."/>
            <person name="Clore G.M."/>
        </authorList>
    </citation>
    <scope>STRUCTURE BY NMR OF 173-247</scope>
</reference>
<reference key="29">
    <citation type="journal article" date="1995" name="Cell">
        <title>Structure of the bacteriophage Mu transposase core: a common structural motif for DNA transposition and retroviral integration.</title>
        <authorList>
            <person name="Rice P."/>
            <person name="Mizuuchi K."/>
        </authorList>
    </citation>
    <scope>X-RAY CRYSTALLOGRAPHY (2.8 ANGSTROMS) OF 248-574</scope>
    <scope>METAL-BINDING</scope>
</reference>
<reference key="30">
    <citation type="journal article" date="2012" name="Nature">
        <title>The mu transpososome structure sheds light on DDE recombinase evolution.</title>
        <authorList>
            <person name="Montano S.P."/>
            <person name="Pigli Y.Z."/>
            <person name="Rice P.A."/>
        </authorList>
    </citation>
    <scope>X-RAY CRYSTALLOGRAPHY (3.71 ANGSTROMS) OF 77-605</scope>
    <scope>FUNCTION</scope>
</reference>
<comment type="function">
    <text>Responsible for viral genome integration into the host chromosome. During integration of the incoming virus, DDE-recombinase A cleaves both viral DNA ends and the resulting 3'-OH perform a nucleophilic attack of the host DNA. The 5' flanking DNA attached to the ends of the viral genome (flaps) are resected by the DDE-recombinase A endonuclease activity, with the help of host chaperone ClpX. The gaps created in the host chromosome by the viral genome insertion are repaired by the host primary machinery for double-strand break repair.</text>
</comment>
<comment type="function">
    <text>Responsible for replication of the viral genome by replicative transposition. During replicative transposition, DDE-recombinase A is part of the transpososome complex. DDE-recombinase A cleaves the viral DNA and the resulting 3'-OH performs a nucleophilic attack of the host DNA. The 5' flanking DNA is not resected and an intermediary structure is formed. This structure is resolved by target-primed replication leading to two copies of the viral genome (the original one and the copied one). Host ClpX and translation initiation factor IF2 play an essential transpososome-remodeling role by releasing the block between transposition and DNA replication. Successive rounds of replicative transposition can lead up to 100 copies of the viral genome.</text>
</comment>
<comment type="function">
    <text>Promotes replication and thereby lytic development by competing with repressor c (Repc) for binding to the internal activation sequence (IAS) in the enhancer/operator region. The outcome of this competition determines if the virus enters latency or starts replication.</text>
</comment>
<comment type="cofactor">
    <cofactor evidence="3 9">
        <name>Mg(2+)</name>
        <dbReference type="ChEBI" id="CHEBI:18420"/>
    </cofactor>
</comment>
<comment type="subunit">
    <text evidence="4 5 10 11">Homotetramer. Part of the transpososome complex composed of a DDE-recombinase A tetramer synapsing the ends of the viral genome and the enhancer element. Interacts with target DNA activator B; this interaction brings DDE-recombinase A to the transposition target site. Interacts with host ClpX; this interaction remodels the transpososome for replication and is required for the flaps endonuclease activity of DDE-recombinase A. Binds (via N-terminus) three distinct recognition sites in the AttR and AttL regions of the viral genome ends: R1, R2, and R3 on the right end and L1, L2, and L3 on the left, not all of which are essential for transposition. The active transpososome is formed by three DDE-recombinase A subunits tightly bound to R1, R2, L1 plus a fourth subunit tightly bound in the complex but weakly bound to the L2 recognition site. Only two subunits out of the four involved are responsible for catalysis. Each subunit performs the cleavage and joining reactions for one DNA end and acts in trans, ensuring the reaction is only initiated when both viral genome ends are paired.</text>
</comment>
<comment type="subcellular location">
    <subcellularLocation>
        <location evidence="12">Host cytoplasm</location>
    </subcellularLocation>
</comment>
<comment type="induction">
    <text evidence="7">Expressed in the early phase of the viral replicative cycle. Expression of early genes is repressed by viral Repc (latency) and favored by viral Ner protein.</text>
</comment>
<comment type="domain">
    <text>The catalytic domain contains two distinct activities, the cleavage and strand transfer activity and the flaps endonuclease activity. The N-terminal HTH Mu-type domain 1-alpha is responsible for sequence-specific DNA binding to the IAS. Two adjacent regions 1-beta and 1-gamma bind to the ends of the viral genome.</text>
</comment>
<comment type="domain">
    <text evidence="1">Contains a D-x(n)-D-x(35)-E motif, named for the conserved glutamic acid and aspartic acid residues and the invariant 35 amino acid spacing between the second and third acidic residues. These residues coordinate the metal ions required for nucleophile activation. Each acidic residue of the D,D(35)E motif is independently essential for the 3'-processing and strand transfer activities (By similarity).</text>
</comment>
<comment type="miscellaneous">
    <text>This enzyme is structurally similar to and performs the same endonucleotidic reaction as retroviral integrases, RNase H, RuvC holliday resolvases and RAG proteins.</text>
</comment>
<comment type="similarity">
    <text evidence="12">Belongs to the mulikevirus repressor c protein family.</text>
</comment>
<dbReference type="EC" id="3.1.22.-"/>
<dbReference type="EC" id="6.5.1.-"/>
<dbReference type="EMBL" id="M11195">
    <property type="protein sequence ID" value="AAA32369.1"/>
    <property type="molecule type" value="Genomic_DNA"/>
</dbReference>
<dbReference type="EMBL" id="M64097">
    <property type="protein sequence ID" value="AAA32379.1"/>
    <property type="molecule type" value="Genomic_DNA"/>
</dbReference>
<dbReference type="EMBL" id="AF083977">
    <property type="protein sequence ID" value="AAF01083.1"/>
    <property type="molecule type" value="Genomic_DNA"/>
</dbReference>
<dbReference type="EMBL" id="V01464">
    <property type="protein sequence ID" value="CAA24713.1"/>
    <property type="molecule type" value="Genomic_DNA"/>
</dbReference>
<dbReference type="EMBL" id="V00868">
    <property type="protein sequence ID" value="CAA24236.1"/>
    <property type="molecule type" value="Genomic_DNA"/>
</dbReference>
<dbReference type="PIR" id="A24746">
    <property type="entry name" value="TQBPU"/>
</dbReference>
<dbReference type="RefSeq" id="NP_050607.1">
    <property type="nucleotide sequence ID" value="NC_000929.1"/>
</dbReference>
<dbReference type="PDB" id="1BCM">
    <property type="method" value="X-ray"/>
    <property type="resolution" value="2.80 A"/>
    <property type="chains" value="A/B=248-574"/>
</dbReference>
<dbReference type="PDB" id="1BCO">
    <property type="method" value="X-ray"/>
    <property type="resolution" value="2.40 A"/>
    <property type="chains" value="A=248-574"/>
</dbReference>
<dbReference type="PDB" id="1TNS">
    <property type="method" value="NMR"/>
    <property type="chains" value="A=1-76"/>
</dbReference>
<dbReference type="PDB" id="1TNT">
    <property type="method" value="NMR"/>
    <property type="chains" value="A=1-76"/>
</dbReference>
<dbReference type="PDB" id="2EZH">
    <property type="method" value="NMR"/>
    <property type="chains" value="A=174-247"/>
</dbReference>
<dbReference type="PDB" id="2EZI">
    <property type="method" value="NMR"/>
    <property type="chains" value="A=174-247"/>
</dbReference>
<dbReference type="PDB" id="2EZK">
    <property type="method" value="NMR"/>
    <property type="chains" value="A=77-174"/>
</dbReference>
<dbReference type="PDB" id="2EZL">
    <property type="method" value="NMR"/>
    <property type="chains" value="A=77-174"/>
</dbReference>
<dbReference type="PDB" id="4FCY">
    <property type="method" value="X-ray"/>
    <property type="resolution" value="3.71 A"/>
    <property type="chains" value="A/B=77-605"/>
</dbReference>
<dbReference type="PDBsum" id="1BCM"/>
<dbReference type="PDBsum" id="1BCO"/>
<dbReference type="PDBsum" id="1TNS"/>
<dbReference type="PDBsum" id="1TNT"/>
<dbReference type="PDBsum" id="2EZH"/>
<dbReference type="PDBsum" id="2EZI"/>
<dbReference type="PDBsum" id="2EZK"/>
<dbReference type="PDBsum" id="2EZL"/>
<dbReference type="PDBsum" id="4FCY"/>
<dbReference type="BMRB" id="P07636"/>
<dbReference type="SMR" id="P07636"/>
<dbReference type="DIP" id="DIP-59984N"/>
<dbReference type="GeneID" id="2636292"/>
<dbReference type="KEGG" id="vg:2636292"/>
<dbReference type="EvolutionaryTrace" id="P07636"/>
<dbReference type="Proteomes" id="UP000002611">
    <property type="component" value="Genome"/>
</dbReference>
<dbReference type="Proteomes" id="UP000401936">
    <property type="component" value="Segment"/>
</dbReference>
<dbReference type="GO" id="GO:0030430">
    <property type="term" value="C:host cell cytoplasm"/>
    <property type="evidence" value="ECO:0007669"/>
    <property type="project" value="UniProtKB-SubCell"/>
</dbReference>
<dbReference type="GO" id="GO:0003677">
    <property type="term" value="F:DNA binding"/>
    <property type="evidence" value="ECO:0007669"/>
    <property type="project" value="UniProtKB-KW"/>
</dbReference>
<dbReference type="GO" id="GO:1990238">
    <property type="term" value="F:double-stranded DNA endonuclease activity"/>
    <property type="evidence" value="ECO:0000315"/>
    <property type="project" value="CACAO"/>
</dbReference>
<dbReference type="GO" id="GO:0016874">
    <property type="term" value="F:ligase activity"/>
    <property type="evidence" value="ECO:0007669"/>
    <property type="project" value="UniProtKB-KW"/>
</dbReference>
<dbReference type="GO" id="GO:0046872">
    <property type="term" value="F:metal ion binding"/>
    <property type="evidence" value="ECO:0007669"/>
    <property type="project" value="UniProtKB-KW"/>
</dbReference>
<dbReference type="GO" id="GO:0004803">
    <property type="term" value="F:transposase activity"/>
    <property type="evidence" value="ECO:0000315"/>
    <property type="project" value="UniProtKB"/>
</dbReference>
<dbReference type="GO" id="GO:0015074">
    <property type="term" value="P:DNA integration"/>
    <property type="evidence" value="ECO:0007669"/>
    <property type="project" value="UniProtKB-KW"/>
</dbReference>
<dbReference type="GO" id="GO:0006281">
    <property type="term" value="P:DNA repair"/>
    <property type="evidence" value="ECO:0007669"/>
    <property type="project" value="UniProtKB-KW"/>
</dbReference>
<dbReference type="GO" id="GO:0006260">
    <property type="term" value="P:DNA replication"/>
    <property type="evidence" value="ECO:0007669"/>
    <property type="project" value="UniProtKB-KW"/>
</dbReference>
<dbReference type="GO" id="GO:0006313">
    <property type="term" value="P:DNA transposition"/>
    <property type="evidence" value="ECO:0007669"/>
    <property type="project" value="InterPro"/>
</dbReference>
<dbReference type="GO" id="GO:0098689">
    <property type="term" value="P:latency-replication decision"/>
    <property type="evidence" value="ECO:0007669"/>
    <property type="project" value="UniProtKB-KW"/>
</dbReference>
<dbReference type="GO" id="GO:0039693">
    <property type="term" value="P:viral DNA genome replication"/>
    <property type="evidence" value="ECO:0007669"/>
    <property type="project" value="UniProtKB-KW"/>
</dbReference>
<dbReference type="FunFam" id="2.30.30.130:FF:000001">
    <property type="entry name" value="DDE-recombinase A"/>
    <property type="match status" value="1"/>
</dbReference>
<dbReference type="FunFam" id="3.30.420.10:FF:000183">
    <property type="entry name" value="Putative phage transposase"/>
    <property type="match status" value="1"/>
</dbReference>
<dbReference type="Gene3D" id="6.10.250.2550">
    <property type="match status" value="1"/>
</dbReference>
<dbReference type="Gene3D" id="1.10.10.60">
    <property type="entry name" value="Homeodomain-like"/>
    <property type="match status" value="2"/>
</dbReference>
<dbReference type="Gene3D" id="3.30.420.10">
    <property type="entry name" value="Ribonuclease H-like superfamily/Ribonuclease H"/>
    <property type="match status" value="1"/>
</dbReference>
<dbReference type="Gene3D" id="2.30.30.130">
    <property type="entry name" value="Transposase, Mu, C-terminal"/>
    <property type="match status" value="1"/>
</dbReference>
<dbReference type="Gene3D" id="1.10.10.10">
    <property type="entry name" value="Winged helix-like DNA-binding domain superfamily/Winged helix DNA-binding domain"/>
    <property type="match status" value="1"/>
</dbReference>
<dbReference type="InterPro" id="IPR009061">
    <property type="entry name" value="DNA-bd_dom_put_sf"/>
</dbReference>
<dbReference type="InterPro" id="IPR009057">
    <property type="entry name" value="Homeodomain-like_sf"/>
</dbReference>
<dbReference type="InterPro" id="IPR003314">
    <property type="entry name" value="Mu-type_HTH"/>
</dbReference>
<dbReference type="InterPro" id="IPR015126">
    <property type="entry name" value="Mu_I-gamma"/>
</dbReference>
<dbReference type="InterPro" id="IPR004189">
    <property type="entry name" value="Phage_Mu_transposase"/>
</dbReference>
<dbReference type="InterPro" id="IPR012337">
    <property type="entry name" value="RNaseH-like_sf"/>
</dbReference>
<dbReference type="InterPro" id="IPR036397">
    <property type="entry name" value="RNaseH_sf"/>
</dbReference>
<dbReference type="InterPro" id="IPR015378">
    <property type="entry name" value="Transposase-like_Mu_C"/>
</dbReference>
<dbReference type="InterPro" id="IPR009004">
    <property type="entry name" value="Transposase_Mu_C"/>
</dbReference>
<dbReference type="InterPro" id="IPR036388">
    <property type="entry name" value="WH-like_DNA-bd_sf"/>
</dbReference>
<dbReference type="Pfam" id="PF02914">
    <property type="entry name" value="DDE_2"/>
    <property type="match status" value="1"/>
</dbReference>
<dbReference type="Pfam" id="PF02316">
    <property type="entry name" value="HTH_Tnp_Mu_1"/>
    <property type="match status" value="1"/>
</dbReference>
<dbReference type="Pfam" id="PF09039">
    <property type="entry name" value="HTH_Tnp_Mu_2"/>
    <property type="match status" value="1"/>
</dbReference>
<dbReference type="Pfam" id="PF09299">
    <property type="entry name" value="Mu-transpos_C"/>
    <property type="match status" value="1"/>
</dbReference>
<dbReference type="SUPFAM" id="SSF46689">
    <property type="entry name" value="Homeodomain-like"/>
    <property type="match status" value="2"/>
</dbReference>
<dbReference type="SUPFAM" id="SSF50610">
    <property type="entry name" value="mu transposase, C-terminal domain"/>
    <property type="match status" value="1"/>
</dbReference>
<dbReference type="SUPFAM" id="SSF46955">
    <property type="entry name" value="Putative DNA-binding domain"/>
    <property type="match status" value="1"/>
</dbReference>
<dbReference type="SUPFAM" id="SSF53098">
    <property type="entry name" value="Ribonuclease H-like"/>
    <property type="match status" value="1"/>
</dbReference>
<dbReference type="PROSITE" id="PS51702">
    <property type="entry name" value="HTH_MU"/>
    <property type="match status" value="1"/>
</dbReference>
<sequence length="663" mass="75003">MELWVSPKECANLPGLPKTSAGVIYVAKKQGWQNRTRAGVKGGKAIEYNANSLPVEAKAALLLRQGEIETSLGYFEIARPTLEAHDYDREALWSKWDNASDSQRRLAEKWLPAVQAADEMLNQGISTKTAFATVAGHYQVSASTLRDKYYQVQKFAKPDWAAALVDGRGASRRNVHKSEFDEDAWQFLIADYLRPEKPAFRKCYERLELAAREHGWSIPSRATAFRRIQQLDEAMVVACREGEHALMHLIPAQQRTVEHLDAMQWINGDGYLHNVFVRWFNGDVIRPKTWFWQDVKTRKILGWRCDVSENIDSIRLSFMDVVTRYGIPEDFHITIDNTRGAANKWLTGGAPNRYRFKVKEDDPKGLFLLMGAKMHWTSVVAGKGWGQAKPVERAFGVGGLEEYVDKHPALAGAYTGPNPQAKPDNYGDRAVDAELFLKTLAEGVAMFNARTGRETEMCGGKLSFDDVFEREYARTIVRKPTEEQKRMLLLPAEAVNVSRKGEFTLKVGGSLKGAKNVYYNMALMNAGVKKVVVRFDPQQLHSTVYCYTLDGRFICEAECLAPVAFNDAAAGREYRRRQKQLKSATKAAIKAQKQMDALEVAELLPQIAEPAAPESRIVGIFRPSGNTERVKNQERDDEYETERDEYLNHSLDILEQNRRKKAI</sequence>
<proteinExistence type="evidence at protein level"/>
<protein>
    <recommendedName>
        <fullName>DDE-recombinase A</fullName>
        <ecNumber>3.1.22.-</ecNumber>
        <ecNumber>6.5.1.-</ecNumber>
    </recommendedName>
    <alternativeName>
        <fullName>DDE-transposase A</fullName>
    </alternativeName>
    <alternativeName>
        <fullName>Gene product 03</fullName>
        <shortName>gp03</shortName>
    </alternativeName>
    <alternativeName>
        <fullName>Gene product A</fullName>
        <shortName>gpA</shortName>
    </alternativeName>
    <alternativeName>
        <fullName>MuA</fullName>
    </alternativeName>
</protein>
<accession>P07636</accession>
<accession>P06021</accession>
<feature type="chain" id="PRO_0000077584" description="DDE-recombinase A">
    <location>
        <begin position="1"/>
        <end position="663"/>
    </location>
</feature>
<feature type="domain" description="HTH Mu-type; 1-alpha, viral IAS binding" evidence="2">
    <location>
        <begin position="1"/>
        <end position="69"/>
    </location>
</feature>
<feature type="DNA-binding region" description="H-T-H motif; viral genome ends binding" evidence="2">
    <location>
        <begin position="176"/>
        <end position="196"/>
    </location>
</feature>
<feature type="region of interest" description="1-beta, viral genome ends binding">
    <location>
        <begin position="77"/>
        <end position="174"/>
    </location>
</feature>
<feature type="region of interest" description="1-gamma, viral genome ends binding">
    <location>
        <begin position="175"/>
        <end position="247"/>
    </location>
</feature>
<feature type="region of interest" description="Catalytic">
    <location>
        <begin position="249"/>
        <end position="490"/>
    </location>
</feature>
<feature type="region of interest" description="Target DNA capture and bending">
    <location>
        <begin position="491"/>
        <end position="605"/>
    </location>
</feature>
<feature type="region of interest" description="Involved in flaps endonuclease activity">
    <location>
        <begin position="575"/>
        <end position="579"/>
    </location>
</feature>
<feature type="region of interest" description="Interaction with MuB">
    <location>
        <begin position="605"/>
        <end position="663"/>
    </location>
</feature>
<feature type="region of interest" description="Interaction with and host ClpX">
    <location>
        <begin position="656"/>
        <end position="663"/>
    </location>
</feature>
<feature type="short sequence motif" description="DDE">
    <location>
        <begin position="269"/>
        <end position="392"/>
    </location>
</feature>
<feature type="binding site">
    <location>
        <position position="269"/>
    </location>
    <ligand>
        <name>Mg(2+)</name>
        <dbReference type="ChEBI" id="CHEBI:18420"/>
        <note>catalytic</note>
    </ligand>
</feature>
<feature type="binding site" evidence="12">
    <location>
        <position position="336"/>
    </location>
    <ligand>
        <name>Mg(2+)</name>
        <dbReference type="ChEBI" id="CHEBI:18420"/>
        <note>catalytic</note>
    </ligand>
</feature>
<feature type="binding site">
    <location>
        <position position="392"/>
    </location>
    <ligand>
        <name>Mg(2+)</name>
        <dbReference type="ChEBI" id="CHEBI:18420"/>
        <note>catalytic</note>
    </ligand>
</feature>
<feature type="mutagenesis site" description="Complete loss of both the DNA cleavage and joining activities without bloing tetramer assembly." evidence="8 9">
    <original>D</original>
    <variation>N</variation>
    <location>
        <position position="269"/>
    </location>
</feature>
<feature type="mutagenesis site" description="Loss of DNA-protein assembly." evidence="8 9">
    <original>D</original>
    <variation>V</variation>
    <location>
        <position position="269"/>
    </location>
</feature>
<feature type="mutagenesis site" description="Almost complete loss of both the DNA cleavage and joining activities without bloing tetramer assembly." evidence="8 9">
    <original>D</original>
    <variation>N</variation>
    <location>
        <position position="294"/>
    </location>
</feature>
<feature type="mutagenesis site" description="Loss of DNA-protein assembly." evidence="8">
    <original>G</original>
    <variation>D</variation>
    <location>
        <position position="348"/>
    </location>
</feature>
<feature type="mutagenesis site" description="Complete loss of both the DNA cleavage and joining activities without bloing tetramer assembly." evidence="8 9">
    <original>E</original>
    <variation>A</variation>
    <location>
        <position position="392"/>
    </location>
</feature>
<feature type="mutagenesis site" description="Complete loss of both the DNA cleavage and joining activities without bloing tetramer assembly." evidence="8 9">
    <original>E</original>
    <variation>Q</variation>
    <location>
        <position position="392"/>
    </location>
</feature>
<feature type="mutagenesis site" description="Almost no effect on both the DNA cleavage and joining activities without bloing tetramer assembly." evidence="9">
    <original>D</original>
    <variation>N</variation>
    <location>
        <position position="550"/>
    </location>
</feature>
<feature type="mutagenesis site" description="Almost no effect on both the DNA cleavage and joining activities without bloing tetramer assembly." evidence="9">
    <original>E</original>
    <variation>Q</variation>
    <location>
        <position position="556"/>
    </location>
</feature>
<feature type="mutagenesis site" description="Almost no effect on both the DNA cleavage and joining activities without bloing tetramer assembly." evidence="9">
    <original>E</original>
    <variation>Q</variation>
    <location>
        <position position="558"/>
    </location>
</feature>
<feature type="mutagenesis site" description="Almost no effect on both the DNA cleavage and joining activities without bloing tetramer assembly." evidence="9">
    <original>D</original>
    <variation>N</variation>
    <location>
        <position position="567"/>
    </location>
</feature>
<feature type="mutagenesis site" description="Almost no effect on both the DNA cleavage and joining activities without bloing tetramer assembly." evidence="9">
    <original>E</original>
    <variation>Q</variation>
    <location>
        <position position="573"/>
    </location>
</feature>
<feature type="mutagenesis site" description="No effect on DNA-binding and flaps endonuclease activity." evidence="6">
    <original>RRRQK</original>
    <variation>KKKQR</variation>
    <location>
        <begin position="575"/>
        <end position="579"/>
    </location>
</feature>
<feature type="mutagenesis site" description="Almost complete loss of flaps endonuclease activity, DNA-binding and transpososome assembly." evidence="6">
    <original>RRRQK</original>
    <variation>LQLQQ</variation>
    <location>
        <begin position="575"/>
        <end position="579"/>
    </location>
</feature>
<feature type="mutagenesis site" description="Partial loss of flaps endonuclease activity resulting in delayed flaps removal. Complete loss of DNA-binding.">
    <original>RRQK</original>
    <variation>QRQQ</variation>
    <location>
        <begin position="576"/>
        <end position="579"/>
    </location>
</feature>
<feature type="mutagenesis site" description="Almost no effect on both the DNA cleavage and joining activities without bloing tetramer assembly." evidence="9">
    <original>D</original>
    <variation>N</variation>
    <location>
        <position position="596"/>
    </location>
</feature>
<feature type="mutagenesis site" description="Almost no effect on both the DNA cleavage and joining activities without bloing tetramer assembly." evidence="9">
    <original>E</original>
    <variation>Q</variation>
    <location>
        <position position="599"/>
    </location>
</feature>
<feature type="mutagenesis site" description="Almost no effect on both the DNA cleavage and joining activities without bloing tetramer assembly." evidence="9">
    <original>E</original>
    <variation>Q</variation>
    <location>
        <position position="602"/>
    </location>
</feature>
<feature type="sequence conflict" description="In Ref. 5; CAA24236." evidence="12" ref="5">
    <original>G</original>
    <variation>R</variation>
    <location>
        <position position="66"/>
    </location>
</feature>
<feature type="sequence conflict" description="In Ref. 2; AAA32379." evidence="12" ref="2">
    <original>P</original>
    <variation>S</variation>
    <location>
        <position position="408"/>
    </location>
</feature>
<feature type="helix" evidence="15">
    <location>
        <begin position="7"/>
        <end position="10"/>
    </location>
</feature>
<feature type="strand" evidence="15">
    <location>
        <begin position="14"/>
        <end position="16"/>
    </location>
</feature>
<feature type="helix" evidence="15">
    <location>
        <begin position="20"/>
        <end position="28"/>
    </location>
</feature>
<feature type="strand" evidence="15">
    <location>
        <begin position="40"/>
        <end position="43"/>
    </location>
</feature>
<feature type="turn" evidence="15">
    <location>
        <begin position="50"/>
        <end position="52"/>
    </location>
</feature>
<feature type="helix" evidence="15">
    <location>
        <begin position="55"/>
        <end position="64"/>
    </location>
</feature>
<feature type="strand" evidence="15">
    <location>
        <begin position="69"/>
        <end position="72"/>
    </location>
</feature>
<feature type="helix" evidence="17">
    <location>
        <begin position="90"/>
        <end position="98"/>
    </location>
</feature>
<feature type="helix" evidence="17">
    <location>
        <begin position="101"/>
        <end position="122"/>
    </location>
</feature>
<feature type="helix" evidence="17">
    <location>
        <begin position="127"/>
        <end position="137"/>
    </location>
</feature>
<feature type="strand" evidence="18">
    <location>
        <begin position="138"/>
        <end position="140"/>
    </location>
</feature>
<feature type="helix" evidence="17">
    <location>
        <begin position="142"/>
        <end position="153"/>
    </location>
</feature>
<feature type="helix" evidence="17">
    <location>
        <begin position="157"/>
        <end position="165"/>
    </location>
</feature>
<feature type="helix" evidence="16">
    <location>
        <begin position="182"/>
        <end position="192"/>
    </location>
</feature>
<feature type="helix" evidence="16">
    <location>
        <begin position="200"/>
        <end position="214"/>
    </location>
</feature>
<feature type="helix" evidence="16">
    <location>
        <begin position="221"/>
        <end position="231"/>
    </location>
</feature>
<feature type="helix" evidence="16">
    <location>
        <begin position="233"/>
        <end position="240"/>
    </location>
</feature>
<feature type="turn" evidence="14">
    <location>
        <begin position="262"/>
        <end position="264"/>
    </location>
</feature>
<feature type="strand" evidence="14">
    <location>
        <begin position="265"/>
        <end position="272"/>
    </location>
</feature>
<feature type="strand" evidence="14">
    <location>
        <begin position="288"/>
        <end position="294"/>
    </location>
</feature>
<feature type="turn" evidence="14">
    <location>
        <begin position="295"/>
        <end position="297"/>
    </location>
</feature>
<feature type="strand" evidence="14">
    <location>
        <begin position="300"/>
        <end position="308"/>
    </location>
</feature>
<feature type="helix" evidence="14">
    <location>
        <begin position="311"/>
        <end position="325"/>
    </location>
</feature>
<feature type="strand" evidence="14">
    <location>
        <begin position="327"/>
        <end position="330"/>
    </location>
</feature>
<feature type="strand" evidence="14">
    <location>
        <begin position="332"/>
        <end position="334"/>
    </location>
</feature>
<feature type="strand" evidence="13">
    <location>
        <begin position="338"/>
        <end position="340"/>
    </location>
</feature>
<feature type="turn" evidence="14">
    <location>
        <begin position="341"/>
        <end position="346"/>
    </location>
</feature>
<feature type="turn" evidence="14">
    <location>
        <begin position="351"/>
        <end position="354"/>
    </location>
</feature>
<feature type="helix" evidence="14">
    <location>
        <begin position="363"/>
        <end position="370"/>
    </location>
</feature>
<feature type="strand" evidence="14">
    <location>
        <begin position="373"/>
        <end position="375"/>
    </location>
</feature>
<feature type="strand" evidence="14">
    <location>
        <begin position="377"/>
        <end position="379"/>
    </location>
</feature>
<feature type="turn" evidence="13">
    <location>
        <begin position="381"/>
        <end position="383"/>
    </location>
</feature>
<feature type="helix" evidence="14">
    <location>
        <begin position="393"/>
        <end position="395"/>
    </location>
</feature>
<feature type="helix" evidence="14">
    <location>
        <begin position="397"/>
        <end position="402"/>
    </location>
</feature>
<feature type="turn" evidence="14">
    <location>
        <begin position="403"/>
        <end position="406"/>
    </location>
</feature>
<feature type="helix" evidence="14">
    <location>
        <begin position="408"/>
        <end position="410"/>
    </location>
</feature>
<feature type="turn" evidence="14">
    <location>
        <begin position="411"/>
        <end position="413"/>
    </location>
</feature>
<feature type="helix" evidence="13">
    <location>
        <begin position="424"/>
        <end position="426"/>
    </location>
</feature>
<feature type="turn" evidence="14">
    <location>
        <begin position="427"/>
        <end position="429"/>
    </location>
</feature>
<feature type="helix" evidence="14">
    <location>
        <begin position="433"/>
        <end position="449"/>
    </location>
</feature>
<feature type="turn" evidence="14">
    <location>
        <begin position="456"/>
        <end position="461"/>
    </location>
</feature>
<feature type="helix" evidence="14">
    <location>
        <begin position="464"/>
        <end position="472"/>
    </location>
</feature>
<feature type="helix" evidence="14">
    <location>
        <begin position="482"/>
        <end position="487"/>
    </location>
</feature>
<feature type="strand" evidence="14">
    <location>
        <begin position="489"/>
        <end position="492"/>
    </location>
</feature>
<feature type="strand" evidence="14">
    <location>
        <begin position="501"/>
        <end position="507"/>
    </location>
</feature>
<feature type="strand" evidence="14">
    <location>
        <begin position="514"/>
        <end position="519"/>
    </location>
</feature>
<feature type="helix" evidence="14">
    <location>
        <begin position="521"/>
        <end position="523"/>
    </location>
</feature>
<feature type="strand" evidence="14">
    <location>
        <begin position="525"/>
        <end position="527"/>
    </location>
</feature>
<feature type="strand" evidence="14">
    <location>
        <begin position="529"/>
        <end position="535"/>
    </location>
</feature>
<feature type="helix" evidence="14">
    <location>
        <begin position="537"/>
        <end position="539"/>
    </location>
</feature>
<feature type="turn" evidence="14">
    <location>
        <begin position="540"/>
        <end position="542"/>
    </location>
</feature>
<feature type="strand" evidence="14">
    <location>
        <begin position="543"/>
        <end position="547"/>
    </location>
</feature>
<feature type="strand" evidence="14">
    <location>
        <begin position="553"/>
        <end position="559"/>
    </location>
</feature>
<name>TNPA_BPMU</name>
<keyword id="KW-0002">3D-structure</keyword>
<keyword id="KW-0228">DNA excision</keyword>
<keyword id="KW-0229">DNA integration</keyword>
<keyword id="KW-0233">DNA recombination</keyword>
<keyword id="KW-0235">DNA replication</keyword>
<keyword id="KW-0238">DNA-binding</keyword>
<keyword id="KW-0244">Early protein</keyword>
<keyword id="KW-1035">Host cytoplasm</keyword>
<keyword id="KW-0378">Hydrolase</keyword>
<keyword id="KW-1252">Latency-replication decision</keyword>
<keyword id="KW-0436">Ligase</keyword>
<keyword id="KW-0460">Magnesium</keyword>
<keyword id="KW-0479">Metal-binding</keyword>
<keyword id="KW-0540">Nuclease</keyword>
<keyword id="KW-1185">Reference proteome</keyword>
<keyword id="KW-0814">Transposable element</keyword>
<keyword id="KW-0815">Transposition</keyword>
<keyword id="KW-1194">Viral DNA replication</keyword>
<organismHost>
    <name type="scientific">Enterobacteriaceae</name>
    <dbReference type="NCBI Taxonomy" id="543"/>
</organismHost>
<gene>
    <name type="primary">A</name>
    <name type="ordered locus">Mup03</name>
</gene>